<comment type="function">
    <text evidence="1">Catalyzes the conversion of dihydroorotate to orotate with NAD(+) as electron acceptor.</text>
</comment>
<comment type="catalytic activity">
    <reaction>
        <text>(S)-dihydroorotate + NAD(+) = orotate + NADH + H(+)</text>
        <dbReference type="Rhea" id="RHEA:13513"/>
        <dbReference type="ChEBI" id="CHEBI:15378"/>
        <dbReference type="ChEBI" id="CHEBI:30839"/>
        <dbReference type="ChEBI" id="CHEBI:30864"/>
        <dbReference type="ChEBI" id="CHEBI:57540"/>
        <dbReference type="ChEBI" id="CHEBI:57945"/>
        <dbReference type="EC" id="1.3.1.14"/>
    </reaction>
</comment>
<comment type="cofactor">
    <cofactor evidence="1">
        <name>FMN</name>
        <dbReference type="ChEBI" id="CHEBI:58210"/>
    </cofactor>
    <text evidence="1">Binds 1 FMN per subunit.</text>
</comment>
<comment type="pathway">
    <text>Pyrimidine metabolism; UMP biosynthesis via de novo pathway; orotate from (S)-dihydroorotate (NAD(+) route): step 1/1.</text>
</comment>
<comment type="subunit">
    <text evidence="1">Heterotetramer of 2 PyrK and 2 PyrD type B subunits.</text>
</comment>
<comment type="subcellular location">
    <subcellularLocation>
        <location evidence="1">Cytoplasm</location>
    </subcellularLocation>
</comment>
<comment type="similarity">
    <text evidence="2">Belongs to the dihydroorotate dehydrogenase family. Type 1 subfamily.</text>
</comment>
<feature type="chain" id="PRO_1000058679" description="Dihydroorotate dehydrogenase B (NAD(+)), catalytic subunit">
    <location>
        <begin position="1"/>
        <end position="310"/>
    </location>
</feature>
<feature type="active site" description="Nucleophile">
    <location>
        <position position="128"/>
    </location>
</feature>
<feature type="binding site" evidence="1">
    <location>
        <position position="19"/>
    </location>
    <ligand>
        <name>FMN</name>
        <dbReference type="ChEBI" id="CHEBI:58210"/>
    </ligand>
</feature>
<feature type="binding site" evidence="1">
    <location>
        <begin position="43"/>
        <end position="44"/>
    </location>
    <ligand>
        <name>FMN</name>
        <dbReference type="ChEBI" id="CHEBI:58210"/>
    </ligand>
</feature>
<feature type="binding site" evidence="1">
    <location>
        <position position="43"/>
    </location>
    <ligand>
        <name>substrate</name>
    </ligand>
</feature>
<feature type="binding site" evidence="1">
    <location>
        <begin position="67"/>
        <end position="71"/>
    </location>
    <ligand>
        <name>substrate</name>
    </ligand>
</feature>
<feature type="binding site" evidence="1">
    <location>
        <position position="97"/>
    </location>
    <ligand>
        <name>FMN</name>
        <dbReference type="ChEBI" id="CHEBI:58210"/>
    </ligand>
</feature>
<feature type="binding site" evidence="1">
    <location>
        <position position="125"/>
    </location>
    <ligand>
        <name>FMN</name>
        <dbReference type="ChEBI" id="CHEBI:58210"/>
    </ligand>
</feature>
<feature type="binding site" evidence="1">
    <location>
        <position position="125"/>
    </location>
    <ligand>
        <name>substrate</name>
    </ligand>
</feature>
<feature type="binding site" evidence="1">
    <location>
        <position position="163"/>
    </location>
    <ligand>
        <name>FMN</name>
        <dbReference type="ChEBI" id="CHEBI:58210"/>
    </ligand>
</feature>
<feature type="binding site" evidence="1">
    <location>
        <position position="189"/>
    </location>
    <ligand>
        <name>FMN</name>
        <dbReference type="ChEBI" id="CHEBI:58210"/>
    </ligand>
</feature>
<feature type="binding site" evidence="1">
    <location>
        <begin position="190"/>
        <end position="191"/>
    </location>
    <ligand>
        <name>substrate</name>
    </ligand>
</feature>
<feature type="binding site" evidence="1">
    <location>
        <position position="215"/>
    </location>
    <ligand>
        <name>FMN</name>
        <dbReference type="ChEBI" id="CHEBI:58210"/>
    </ligand>
</feature>
<feature type="binding site" evidence="1">
    <location>
        <begin position="241"/>
        <end position="242"/>
    </location>
    <ligand>
        <name>FMN</name>
        <dbReference type="ChEBI" id="CHEBI:58210"/>
    </ligand>
</feature>
<feature type="binding site" evidence="1">
    <location>
        <begin position="263"/>
        <end position="264"/>
    </location>
    <ligand>
        <name>FMN</name>
        <dbReference type="ChEBI" id="CHEBI:58210"/>
    </ligand>
</feature>
<accession>A8FD19</accession>
<proteinExistence type="inferred from homology"/>
<evidence type="ECO:0000250" key="1"/>
<evidence type="ECO:0000305" key="2"/>
<name>PYRDB_BACP2</name>
<protein>
    <recommendedName>
        <fullName>Dihydroorotate dehydrogenase B (NAD(+)), catalytic subunit</fullName>
        <shortName>DHOD B</shortName>
        <shortName>DHODase B</shortName>
        <shortName>DHOdehase B</shortName>
        <ecNumber>1.3.1.14</ecNumber>
    </recommendedName>
    <alternativeName>
        <fullName>Dihydroorotate oxidase B</fullName>
    </alternativeName>
    <alternativeName>
        <fullName>Orotate reductase (NADH)</fullName>
    </alternativeName>
</protein>
<organism>
    <name type="scientific">Bacillus pumilus (strain SAFR-032)</name>
    <dbReference type="NCBI Taxonomy" id="315750"/>
    <lineage>
        <taxon>Bacteria</taxon>
        <taxon>Bacillati</taxon>
        <taxon>Bacillota</taxon>
        <taxon>Bacilli</taxon>
        <taxon>Bacillales</taxon>
        <taxon>Bacillaceae</taxon>
        <taxon>Bacillus</taxon>
    </lineage>
</organism>
<gene>
    <name type="primary">pyrD</name>
    <name type="ordered locus">BPUM_1453</name>
</gene>
<sequence>MLNVELPGLSLKNPIIPASGCFGFGREFASLYDLSVLGSIMIKATTLEPRFGNPTPRVAETGAGMLNAIGLQNPGLKGVLENELPWLEQFDTPIIANVAGSQVDDYVEVAEQISQAKNVHALELNISCPNVKTGGIAFGTDPQMAAALTKAVKDVSSVPVYVKLSPNVANIVEIAQAIESAGADGLTMINTLIGMRLDLKTGKPILANKTGGLSGPAIKPVAVRMVHEVSQAVSIPIIGMGGVQNAEDVLEFLLAGASAVAVGTANFVNPFICPEIIEELPNVLAAYGYSSVEECIGRSWKHEALAHHRA</sequence>
<keyword id="KW-0963">Cytoplasm</keyword>
<keyword id="KW-0285">Flavoprotein</keyword>
<keyword id="KW-0288">FMN</keyword>
<keyword id="KW-0520">NAD</keyword>
<keyword id="KW-0560">Oxidoreductase</keyword>
<keyword id="KW-0665">Pyrimidine biosynthesis</keyword>
<reference key="1">
    <citation type="journal article" date="2007" name="PLoS ONE">
        <title>Paradoxical DNA repair and peroxide resistance gene conservation in Bacillus pumilus SAFR-032.</title>
        <authorList>
            <person name="Gioia J."/>
            <person name="Yerrapragada S."/>
            <person name="Qin X."/>
            <person name="Jiang H."/>
            <person name="Igboeli O.C."/>
            <person name="Muzny D."/>
            <person name="Dugan-Rocha S."/>
            <person name="Ding Y."/>
            <person name="Hawes A."/>
            <person name="Liu W."/>
            <person name="Perez L."/>
            <person name="Kovar C."/>
            <person name="Dinh H."/>
            <person name="Lee S."/>
            <person name="Nazareth L."/>
            <person name="Blyth P."/>
            <person name="Holder M."/>
            <person name="Buhay C."/>
            <person name="Tirumalai M.R."/>
            <person name="Liu Y."/>
            <person name="Dasgupta I."/>
            <person name="Bokhetache L."/>
            <person name="Fujita M."/>
            <person name="Karouia F."/>
            <person name="Eswara Moorthy P."/>
            <person name="Siefert J."/>
            <person name="Uzman A."/>
            <person name="Buzumbo P."/>
            <person name="Verma A."/>
            <person name="Zwiya H."/>
            <person name="McWilliams B.D."/>
            <person name="Olowu A."/>
            <person name="Clinkenbeard K.D."/>
            <person name="Newcombe D."/>
            <person name="Golebiewski L."/>
            <person name="Petrosino J.F."/>
            <person name="Nicholson W.L."/>
            <person name="Fox G.E."/>
            <person name="Venkateswaran K."/>
            <person name="Highlander S.K."/>
            <person name="Weinstock G.M."/>
        </authorList>
    </citation>
    <scope>NUCLEOTIDE SEQUENCE [LARGE SCALE GENOMIC DNA]</scope>
    <source>
        <strain>SAFR-032</strain>
    </source>
</reference>
<dbReference type="EC" id="1.3.1.14"/>
<dbReference type="EMBL" id="CP000813">
    <property type="protein sequence ID" value="ABV62136.1"/>
    <property type="molecule type" value="Genomic_DNA"/>
</dbReference>
<dbReference type="RefSeq" id="WP_012009899.1">
    <property type="nucleotide sequence ID" value="NC_009848.4"/>
</dbReference>
<dbReference type="SMR" id="A8FD19"/>
<dbReference type="STRING" id="315750.BPUM_1453"/>
<dbReference type="GeneID" id="5620716"/>
<dbReference type="KEGG" id="bpu:BPUM_1453"/>
<dbReference type="eggNOG" id="COG0167">
    <property type="taxonomic scope" value="Bacteria"/>
</dbReference>
<dbReference type="HOGENOM" id="CLU_042042_0_0_9"/>
<dbReference type="OrthoDB" id="9794954at2"/>
<dbReference type="UniPathway" id="UPA00070">
    <property type="reaction ID" value="UER00945"/>
</dbReference>
<dbReference type="Proteomes" id="UP000001355">
    <property type="component" value="Chromosome"/>
</dbReference>
<dbReference type="GO" id="GO:0005737">
    <property type="term" value="C:cytoplasm"/>
    <property type="evidence" value="ECO:0007669"/>
    <property type="project" value="UniProtKB-SubCell"/>
</dbReference>
<dbReference type="GO" id="GO:0004589">
    <property type="term" value="F:dihydroorotate dehydrogenase (NAD+) activity"/>
    <property type="evidence" value="ECO:0007669"/>
    <property type="project" value="UniProtKB-EC"/>
</dbReference>
<dbReference type="GO" id="GO:0006207">
    <property type="term" value="P:'de novo' pyrimidine nucleobase biosynthetic process"/>
    <property type="evidence" value="ECO:0007669"/>
    <property type="project" value="InterPro"/>
</dbReference>
<dbReference type="GO" id="GO:0044205">
    <property type="term" value="P:'de novo' UMP biosynthetic process"/>
    <property type="evidence" value="ECO:0007669"/>
    <property type="project" value="UniProtKB-UniRule"/>
</dbReference>
<dbReference type="CDD" id="cd04740">
    <property type="entry name" value="DHOD_1B_like"/>
    <property type="match status" value="1"/>
</dbReference>
<dbReference type="FunFam" id="3.20.20.70:FF:000069">
    <property type="entry name" value="Dihydroorotate dehydrogenase"/>
    <property type="match status" value="1"/>
</dbReference>
<dbReference type="Gene3D" id="3.20.20.70">
    <property type="entry name" value="Aldolase class I"/>
    <property type="match status" value="1"/>
</dbReference>
<dbReference type="HAMAP" id="MF_00224">
    <property type="entry name" value="DHO_dh_type1"/>
    <property type="match status" value="1"/>
</dbReference>
<dbReference type="InterPro" id="IPR013785">
    <property type="entry name" value="Aldolase_TIM"/>
</dbReference>
<dbReference type="InterPro" id="IPR050074">
    <property type="entry name" value="DHO_dehydrogenase"/>
</dbReference>
<dbReference type="InterPro" id="IPR033888">
    <property type="entry name" value="DHOD_1B"/>
</dbReference>
<dbReference type="InterPro" id="IPR024920">
    <property type="entry name" value="Dihydroorotate_DH_1"/>
</dbReference>
<dbReference type="InterPro" id="IPR012135">
    <property type="entry name" value="Dihydroorotate_DH_1_2"/>
</dbReference>
<dbReference type="InterPro" id="IPR005720">
    <property type="entry name" value="Dihydroorotate_DH_cat"/>
</dbReference>
<dbReference type="InterPro" id="IPR001295">
    <property type="entry name" value="Dihydroorotate_DH_CS"/>
</dbReference>
<dbReference type="InterPro" id="IPR049622">
    <property type="entry name" value="Dihydroorotate_DH_I"/>
</dbReference>
<dbReference type="NCBIfam" id="NF005574">
    <property type="entry name" value="PRK07259.1"/>
    <property type="match status" value="1"/>
</dbReference>
<dbReference type="NCBIfam" id="TIGR01037">
    <property type="entry name" value="pyrD_sub1_fam"/>
    <property type="match status" value="1"/>
</dbReference>
<dbReference type="PANTHER" id="PTHR48109:SF1">
    <property type="entry name" value="DIHYDROOROTATE DEHYDROGENASE (FUMARATE)"/>
    <property type="match status" value="1"/>
</dbReference>
<dbReference type="PANTHER" id="PTHR48109">
    <property type="entry name" value="DIHYDROOROTATE DEHYDROGENASE (QUINONE), MITOCHONDRIAL-RELATED"/>
    <property type="match status" value="1"/>
</dbReference>
<dbReference type="Pfam" id="PF01180">
    <property type="entry name" value="DHO_dh"/>
    <property type="match status" value="1"/>
</dbReference>
<dbReference type="PIRSF" id="PIRSF000164">
    <property type="entry name" value="DHO_oxidase"/>
    <property type="match status" value="1"/>
</dbReference>
<dbReference type="SUPFAM" id="SSF51395">
    <property type="entry name" value="FMN-linked oxidoreductases"/>
    <property type="match status" value="1"/>
</dbReference>
<dbReference type="PROSITE" id="PS00911">
    <property type="entry name" value="DHODEHASE_1"/>
    <property type="match status" value="1"/>
</dbReference>
<dbReference type="PROSITE" id="PS00912">
    <property type="entry name" value="DHODEHASE_2"/>
    <property type="match status" value="1"/>
</dbReference>